<reference key="1">
    <citation type="journal article" date="2005" name="Science">
        <title>The transcriptional landscape of the mammalian genome.</title>
        <authorList>
            <person name="Carninci P."/>
            <person name="Kasukawa T."/>
            <person name="Katayama S."/>
            <person name="Gough J."/>
            <person name="Frith M.C."/>
            <person name="Maeda N."/>
            <person name="Oyama R."/>
            <person name="Ravasi T."/>
            <person name="Lenhard B."/>
            <person name="Wells C."/>
            <person name="Kodzius R."/>
            <person name="Shimokawa K."/>
            <person name="Bajic V.B."/>
            <person name="Brenner S.E."/>
            <person name="Batalov S."/>
            <person name="Forrest A.R."/>
            <person name="Zavolan M."/>
            <person name="Davis M.J."/>
            <person name="Wilming L.G."/>
            <person name="Aidinis V."/>
            <person name="Allen J.E."/>
            <person name="Ambesi-Impiombato A."/>
            <person name="Apweiler R."/>
            <person name="Aturaliya R.N."/>
            <person name="Bailey T.L."/>
            <person name="Bansal M."/>
            <person name="Baxter L."/>
            <person name="Beisel K.W."/>
            <person name="Bersano T."/>
            <person name="Bono H."/>
            <person name="Chalk A.M."/>
            <person name="Chiu K.P."/>
            <person name="Choudhary V."/>
            <person name="Christoffels A."/>
            <person name="Clutterbuck D.R."/>
            <person name="Crowe M.L."/>
            <person name="Dalla E."/>
            <person name="Dalrymple B.P."/>
            <person name="de Bono B."/>
            <person name="Della Gatta G."/>
            <person name="di Bernardo D."/>
            <person name="Down T."/>
            <person name="Engstrom P."/>
            <person name="Fagiolini M."/>
            <person name="Faulkner G."/>
            <person name="Fletcher C.F."/>
            <person name="Fukushima T."/>
            <person name="Furuno M."/>
            <person name="Futaki S."/>
            <person name="Gariboldi M."/>
            <person name="Georgii-Hemming P."/>
            <person name="Gingeras T.R."/>
            <person name="Gojobori T."/>
            <person name="Green R.E."/>
            <person name="Gustincich S."/>
            <person name="Harbers M."/>
            <person name="Hayashi Y."/>
            <person name="Hensch T.K."/>
            <person name="Hirokawa N."/>
            <person name="Hill D."/>
            <person name="Huminiecki L."/>
            <person name="Iacono M."/>
            <person name="Ikeo K."/>
            <person name="Iwama A."/>
            <person name="Ishikawa T."/>
            <person name="Jakt M."/>
            <person name="Kanapin A."/>
            <person name="Katoh M."/>
            <person name="Kawasawa Y."/>
            <person name="Kelso J."/>
            <person name="Kitamura H."/>
            <person name="Kitano H."/>
            <person name="Kollias G."/>
            <person name="Krishnan S.P."/>
            <person name="Kruger A."/>
            <person name="Kummerfeld S.K."/>
            <person name="Kurochkin I.V."/>
            <person name="Lareau L.F."/>
            <person name="Lazarevic D."/>
            <person name="Lipovich L."/>
            <person name="Liu J."/>
            <person name="Liuni S."/>
            <person name="McWilliam S."/>
            <person name="Madan Babu M."/>
            <person name="Madera M."/>
            <person name="Marchionni L."/>
            <person name="Matsuda H."/>
            <person name="Matsuzawa S."/>
            <person name="Miki H."/>
            <person name="Mignone F."/>
            <person name="Miyake S."/>
            <person name="Morris K."/>
            <person name="Mottagui-Tabar S."/>
            <person name="Mulder N."/>
            <person name="Nakano N."/>
            <person name="Nakauchi H."/>
            <person name="Ng P."/>
            <person name="Nilsson R."/>
            <person name="Nishiguchi S."/>
            <person name="Nishikawa S."/>
            <person name="Nori F."/>
            <person name="Ohara O."/>
            <person name="Okazaki Y."/>
            <person name="Orlando V."/>
            <person name="Pang K.C."/>
            <person name="Pavan W.J."/>
            <person name="Pavesi G."/>
            <person name="Pesole G."/>
            <person name="Petrovsky N."/>
            <person name="Piazza S."/>
            <person name="Reed J."/>
            <person name="Reid J.F."/>
            <person name="Ring B.Z."/>
            <person name="Ringwald M."/>
            <person name="Rost B."/>
            <person name="Ruan Y."/>
            <person name="Salzberg S.L."/>
            <person name="Sandelin A."/>
            <person name="Schneider C."/>
            <person name="Schoenbach C."/>
            <person name="Sekiguchi K."/>
            <person name="Semple C.A."/>
            <person name="Seno S."/>
            <person name="Sessa L."/>
            <person name="Sheng Y."/>
            <person name="Shibata Y."/>
            <person name="Shimada H."/>
            <person name="Shimada K."/>
            <person name="Silva D."/>
            <person name="Sinclair B."/>
            <person name="Sperling S."/>
            <person name="Stupka E."/>
            <person name="Sugiura K."/>
            <person name="Sultana R."/>
            <person name="Takenaka Y."/>
            <person name="Taki K."/>
            <person name="Tammoja K."/>
            <person name="Tan S.L."/>
            <person name="Tang S."/>
            <person name="Taylor M.S."/>
            <person name="Tegner J."/>
            <person name="Teichmann S.A."/>
            <person name="Ueda H.R."/>
            <person name="van Nimwegen E."/>
            <person name="Verardo R."/>
            <person name="Wei C.L."/>
            <person name="Yagi K."/>
            <person name="Yamanishi H."/>
            <person name="Zabarovsky E."/>
            <person name="Zhu S."/>
            <person name="Zimmer A."/>
            <person name="Hide W."/>
            <person name="Bult C."/>
            <person name="Grimmond S.M."/>
            <person name="Teasdale R.D."/>
            <person name="Liu E.T."/>
            <person name="Brusic V."/>
            <person name="Quackenbush J."/>
            <person name="Wahlestedt C."/>
            <person name="Mattick J.S."/>
            <person name="Hume D.A."/>
            <person name="Kai C."/>
            <person name="Sasaki D."/>
            <person name="Tomaru Y."/>
            <person name="Fukuda S."/>
            <person name="Kanamori-Katayama M."/>
            <person name="Suzuki M."/>
            <person name="Aoki J."/>
            <person name="Arakawa T."/>
            <person name="Iida J."/>
            <person name="Imamura K."/>
            <person name="Itoh M."/>
            <person name="Kato T."/>
            <person name="Kawaji H."/>
            <person name="Kawagashira N."/>
            <person name="Kawashima T."/>
            <person name="Kojima M."/>
            <person name="Kondo S."/>
            <person name="Konno H."/>
            <person name="Nakano K."/>
            <person name="Ninomiya N."/>
            <person name="Nishio T."/>
            <person name="Okada M."/>
            <person name="Plessy C."/>
            <person name="Shibata K."/>
            <person name="Shiraki T."/>
            <person name="Suzuki S."/>
            <person name="Tagami M."/>
            <person name="Waki K."/>
            <person name="Watahiki A."/>
            <person name="Okamura-Oho Y."/>
            <person name="Suzuki H."/>
            <person name="Kawai J."/>
            <person name="Hayashizaki Y."/>
        </authorList>
    </citation>
    <scope>NUCLEOTIDE SEQUENCE [LARGE SCALE MRNA] (ISOFORMS 1 AND 2)</scope>
    <source>
        <strain>C57BL/6J</strain>
        <tissue>Colon</tissue>
        <tissue>Egg</tissue>
        <tissue>Liver</tissue>
        <tissue>Muellerian duct</tissue>
    </source>
</reference>
<reference key="2">
    <citation type="journal article" date="2004" name="Genome Res.">
        <title>The status, quality, and expansion of the NIH full-length cDNA project: the Mammalian Gene Collection (MGC).</title>
        <authorList>
            <consortium name="The MGC Project Team"/>
        </authorList>
    </citation>
    <scope>NUCLEOTIDE SEQUENCE [LARGE SCALE MRNA] (ISOFORMS 1 AND 3)</scope>
    <source>
        <strain>C57BL/6J</strain>
        <strain>Czech II</strain>
        <strain>FVB/N</strain>
        <tissue>Brain</tissue>
        <tissue>Kidney</tissue>
        <tissue>Mammary tumor</tissue>
    </source>
</reference>
<reference key="3">
    <citation type="journal article" date="2010" name="Cell">
        <title>A tissue-specific atlas of mouse protein phosphorylation and expression.</title>
        <authorList>
            <person name="Huttlin E.L."/>
            <person name="Jedrychowski M.P."/>
            <person name="Elias J.E."/>
            <person name="Goswami T."/>
            <person name="Rad R."/>
            <person name="Beausoleil S.A."/>
            <person name="Villen J."/>
            <person name="Haas W."/>
            <person name="Sowa M.E."/>
            <person name="Gygi S.P."/>
        </authorList>
    </citation>
    <scope>IDENTIFICATION BY MASS SPECTROMETRY [LARGE SCALE ANALYSIS]</scope>
    <source>
        <tissue>Brain</tissue>
        <tissue>Brown adipose tissue</tissue>
        <tissue>Heart</tissue>
        <tissue>Kidney</tissue>
        <tissue>Liver</tissue>
        <tissue>Lung</tissue>
        <tissue>Pancreas</tissue>
        <tissue>Spleen</tissue>
        <tissue>Testis</tissue>
    </source>
</reference>
<reference key="4">
    <citation type="journal article" date="2020" name="J. Med. Genet.">
        <title>Biallelic VPS35L pathogenic variants cause 3C/Ritscher-Schinzel-like syndrome through dysfunction of retriever complex.</title>
        <authorList>
            <person name="Kato K."/>
            <person name="Oka Y."/>
            <person name="Muramatsu H."/>
            <person name="Vasilev F.F."/>
            <person name="Otomo T."/>
            <person name="Oishi H."/>
            <person name="Kawano Y."/>
            <person name="Kidokoro H."/>
            <person name="Nakazawa Y."/>
            <person name="Ogi T."/>
            <person name="Takahashi Y."/>
            <person name="Saitoh S."/>
        </authorList>
    </citation>
    <scope>DISRUPTION PHENOTYPE</scope>
</reference>
<comment type="function">
    <text evidence="1">Acts as a component of the retriever complex. The retriever complex is a heterotrimeric complex related to retromer cargo-selective complex (CSC) and essential for retromer-independent retrieval and recycling of numerous cargos such as integrin alpha-5/beta-1 (ITGA5:ITGB1). The recruitment of the retriever complex to the endosomal membrane involves CCC and WASH complexes. In the endosomes, drives the retrieval and recycling of NxxY-motif-containing cargo proteins by coupling to SNX17, a cargo essential for the homeostatic maintenance of numerous cell surface proteins associated with processes that include cell migration, cell adhesion, nutrient supply and cell signaling. Involved in copper-dependent ATP7A trafficking between the trans-Golgi network and vesicles in the cell periphery; the function is proposed to depend on its association with the CCC complex and cooperation with the WASH complex on early endosomes. Seems not to be required for CCC complex stability.</text>
</comment>
<comment type="subunit">
    <text evidence="1">Component of the heterotrimeric retriever complex formed by VPS26C, VPS29 and VPS35L. Interacts with VPS29. Interacts with COMMD1, CCDC93 and CCDC22; associates with the CCC (COMMD/CCDC22/CCDC93) complex which contains at least COMMD1 (and possibly other COMM domain-containing proteins), CCDC22 and CCDC93. Interacts with WASHC1, WASHC2A and WASHC2C. Interacts with SNX17 and SNX31.</text>
</comment>
<comment type="subcellular location">
    <subcellularLocation>
        <location evidence="2">Membrane</location>
        <topology evidence="2">Single-pass membrane protein</topology>
    </subcellularLocation>
    <subcellularLocation>
        <location evidence="1">Endosome</location>
    </subcellularLocation>
    <text evidence="1">Endosome location is dependent of the association with the CCC and WASH complexes.</text>
</comment>
<comment type="alternative products">
    <event type="alternative splicing"/>
    <isoform>
        <id>Q8BWQ6-1</id>
        <name>1</name>
        <sequence type="displayed"/>
    </isoform>
    <isoform>
        <id>Q8BWQ6-2</id>
        <name>2</name>
        <sequence type="described" ref="VSP_029541 VSP_029542"/>
    </isoform>
    <isoform>
        <id>Q8BWQ6-3</id>
        <name>3</name>
        <sequence type="described" ref="VSP_029539 VSP_029540"/>
    </isoform>
</comment>
<comment type="disruption phenotype">
    <text evidence="4">Homozygous VPS35L knockout is embryonic lethal at an early stage of embryo development, between 7.5 and 10.5 dpc.</text>
</comment>
<comment type="similarity">
    <text evidence="7">Belongs to the VPS35L family.</text>
</comment>
<gene>
    <name evidence="8" type="primary">Vps35l</name>
</gene>
<dbReference type="EMBL" id="AK018573">
    <property type="protein sequence ID" value="BAB31285.1"/>
    <property type="molecule type" value="mRNA"/>
</dbReference>
<dbReference type="EMBL" id="AK050302">
    <property type="protein sequence ID" value="BAC34176.1"/>
    <property type="molecule type" value="mRNA"/>
</dbReference>
<dbReference type="EMBL" id="AK135468">
    <property type="protein sequence ID" value="BAE22543.1"/>
    <property type="molecule type" value="mRNA"/>
</dbReference>
<dbReference type="EMBL" id="AK136140">
    <property type="protein sequence ID" value="BAE22841.1"/>
    <property type="molecule type" value="mRNA"/>
</dbReference>
<dbReference type="EMBL" id="BC007154">
    <property type="protein sequence ID" value="AAH07154.1"/>
    <property type="molecule type" value="mRNA"/>
</dbReference>
<dbReference type="EMBL" id="BC025808">
    <property type="protein sequence ID" value="AAH25808.1"/>
    <property type="molecule type" value="mRNA"/>
</dbReference>
<dbReference type="EMBL" id="BC043674">
    <property type="protein sequence ID" value="AAH43674.1"/>
    <property type="molecule type" value="mRNA"/>
</dbReference>
<dbReference type="EMBL" id="BC054720">
    <property type="protein sequence ID" value="AAH54720.1"/>
    <property type="molecule type" value="mRNA"/>
</dbReference>
<dbReference type="CCDS" id="CCDS21776.2">
    <molecule id="Q8BWQ6-1"/>
</dbReference>
<dbReference type="RefSeq" id="NP_082091.3">
    <molecule id="Q8BWQ6-1"/>
    <property type="nucleotide sequence ID" value="NM_027815.4"/>
</dbReference>
<dbReference type="SMR" id="Q8BWQ6"/>
<dbReference type="BioGRID" id="214753">
    <property type="interactions" value="1"/>
</dbReference>
<dbReference type="FunCoup" id="Q8BWQ6">
    <property type="interactions" value="3593"/>
</dbReference>
<dbReference type="IntAct" id="Q8BWQ6">
    <property type="interactions" value="3"/>
</dbReference>
<dbReference type="STRING" id="10090.ENSMUSP00000051263"/>
<dbReference type="GlyGen" id="Q8BWQ6">
    <property type="glycosylation" value="3 sites, 2 N-linked glycans (2 sites), 1 O-linked glycan (1 site)"/>
</dbReference>
<dbReference type="iPTMnet" id="Q8BWQ6"/>
<dbReference type="PhosphoSitePlus" id="Q8BWQ6"/>
<dbReference type="SwissPalm" id="Q8BWQ6"/>
<dbReference type="jPOST" id="Q8BWQ6"/>
<dbReference type="PaxDb" id="10090-ENSMUSP00000051263"/>
<dbReference type="PeptideAtlas" id="Q8BWQ6"/>
<dbReference type="Pumba" id="Q8BWQ6"/>
<dbReference type="Antibodypedia" id="52453">
    <property type="antibodies" value="48 antibodies from 14 providers"/>
</dbReference>
<dbReference type="DNASU" id="71517"/>
<dbReference type="Ensembl" id="ENSMUST00000033280.14">
    <molecule id="Q8BWQ6-3"/>
    <property type="protein sequence ID" value="ENSMUSP00000033280.8"/>
    <property type="gene ID" value="ENSMUSG00000030982.20"/>
</dbReference>
<dbReference type="Ensembl" id="ENSMUST00000059390.13">
    <molecule id="Q8BWQ6-1"/>
    <property type="protein sequence ID" value="ENSMUSP00000051263.8"/>
    <property type="gene ID" value="ENSMUSG00000030982.20"/>
</dbReference>
<dbReference type="GeneID" id="71517"/>
<dbReference type="KEGG" id="mmu:71517"/>
<dbReference type="UCSC" id="uc009jkp.2">
    <molecule id="Q8BWQ6-3"/>
    <property type="organism name" value="mouse"/>
</dbReference>
<dbReference type="AGR" id="MGI:1918767"/>
<dbReference type="CTD" id="57020"/>
<dbReference type="MGI" id="MGI:1918767">
    <property type="gene designation" value="Vps35l"/>
</dbReference>
<dbReference type="VEuPathDB" id="HostDB:ENSMUSG00000030982"/>
<dbReference type="eggNOG" id="KOG3682">
    <property type="taxonomic scope" value="Eukaryota"/>
</dbReference>
<dbReference type="GeneTree" id="ENSGT00390000011343"/>
<dbReference type="InParanoid" id="Q8BWQ6"/>
<dbReference type="OrthoDB" id="1734063at2759"/>
<dbReference type="PhylomeDB" id="Q8BWQ6"/>
<dbReference type="Reactome" id="R-MMU-6798695">
    <property type="pathway name" value="Neutrophil degranulation"/>
</dbReference>
<dbReference type="BioGRID-ORCS" id="71517">
    <property type="hits" value="5 hits in 76 CRISPR screens"/>
</dbReference>
<dbReference type="PRO" id="PR:Q8BWQ6"/>
<dbReference type="Proteomes" id="UP000000589">
    <property type="component" value="Chromosome 7"/>
</dbReference>
<dbReference type="RNAct" id="Q8BWQ6">
    <property type="molecule type" value="protein"/>
</dbReference>
<dbReference type="Bgee" id="ENSMUSG00000030982">
    <property type="expression patterns" value="Expressed in animal zygote and 257 other cell types or tissues"/>
</dbReference>
<dbReference type="ExpressionAtlas" id="Q8BWQ6">
    <property type="expression patterns" value="baseline and differential"/>
</dbReference>
<dbReference type="GO" id="GO:0005768">
    <property type="term" value="C:endosome"/>
    <property type="evidence" value="ECO:0000250"/>
    <property type="project" value="UniProtKB"/>
</dbReference>
<dbReference type="GO" id="GO:0016020">
    <property type="term" value="C:membrane"/>
    <property type="evidence" value="ECO:0007669"/>
    <property type="project" value="UniProtKB-SubCell"/>
</dbReference>
<dbReference type="GO" id="GO:0032456">
    <property type="term" value="P:endocytic recycling"/>
    <property type="evidence" value="ECO:0000250"/>
    <property type="project" value="UniProtKB"/>
</dbReference>
<dbReference type="GO" id="GO:0006893">
    <property type="term" value="P:Golgi to plasma membrane transport"/>
    <property type="evidence" value="ECO:0007669"/>
    <property type="project" value="Ensembl"/>
</dbReference>
<dbReference type="GO" id="GO:0015031">
    <property type="term" value="P:protein transport"/>
    <property type="evidence" value="ECO:0007669"/>
    <property type="project" value="UniProtKB-KW"/>
</dbReference>
<dbReference type="InterPro" id="IPR029705">
    <property type="entry name" value="VPS35L"/>
</dbReference>
<dbReference type="PANTHER" id="PTHR13673">
    <property type="entry name" value="ESOPHAGEAL CANCER ASSOCIATED PROTEIN"/>
    <property type="match status" value="1"/>
</dbReference>
<dbReference type="PANTHER" id="PTHR13673:SF0">
    <property type="entry name" value="VPS35 ENDOSOMAL PROTEIN-SORTING FACTOR-LIKE"/>
    <property type="match status" value="1"/>
</dbReference>
<protein>
    <recommendedName>
        <fullName evidence="7">VPS35 endosomal protein-sorting factor-like</fullName>
    </recommendedName>
</protein>
<name>VP35L_MOUSE</name>
<organism>
    <name type="scientific">Mus musculus</name>
    <name type="common">Mouse</name>
    <dbReference type="NCBI Taxonomy" id="10090"/>
    <lineage>
        <taxon>Eukaryota</taxon>
        <taxon>Metazoa</taxon>
        <taxon>Chordata</taxon>
        <taxon>Craniata</taxon>
        <taxon>Vertebrata</taxon>
        <taxon>Euteleostomi</taxon>
        <taxon>Mammalia</taxon>
        <taxon>Eutheria</taxon>
        <taxon>Euarchontoglires</taxon>
        <taxon>Glires</taxon>
        <taxon>Rodentia</taxon>
        <taxon>Myomorpha</taxon>
        <taxon>Muroidea</taxon>
        <taxon>Muridae</taxon>
        <taxon>Murinae</taxon>
        <taxon>Mus</taxon>
        <taxon>Mus</taxon>
    </lineage>
</organism>
<feature type="chain" id="PRO_0000311353" description="VPS35 endosomal protein-sorting factor-like">
    <location>
        <begin position="1"/>
        <end position="963"/>
    </location>
</feature>
<feature type="transmembrane region" description="Helical" evidence="2">
    <location>
        <begin position="699"/>
        <end position="719"/>
    </location>
</feature>
<feature type="region of interest" description="Disordered" evidence="3">
    <location>
        <begin position="43"/>
        <end position="112"/>
    </location>
</feature>
<feature type="compositionally biased region" description="Low complexity" evidence="3">
    <location>
        <begin position="51"/>
        <end position="72"/>
    </location>
</feature>
<feature type="modified residue" description="Phosphoserine" evidence="1">
    <location>
        <position position="265"/>
    </location>
</feature>
<feature type="splice variant" id="VSP_029539" description="In isoform 3." evidence="5">
    <location>
        <begin position="1"/>
        <end position="235"/>
    </location>
</feature>
<feature type="splice variant" id="VSP_029540" description="In isoform 3." evidence="5">
    <original>DILDTF</original>
    <variation>MLLAGH</variation>
    <location>
        <begin position="236"/>
        <end position="241"/>
    </location>
</feature>
<feature type="splice variant" id="VSP_029541" description="In isoform 2." evidence="6">
    <original>ALLTEMMERCKKLGNNALLLNSVMSA</original>
    <variation>CALSSLPSLLSELRGLSHLWRCAEAV</variation>
    <location>
        <begin position="409"/>
        <end position="434"/>
    </location>
</feature>
<feature type="splice variant" id="VSP_029542" description="In isoform 2." evidence="6">
    <location>
        <begin position="435"/>
        <end position="963"/>
    </location>
</feature>
<feature type="sequence conflict" description="In Ref. 1; BAE22841." evidence="7" ref="1">
    <original>L</original>
    <variation>V</variation>
    <location>
        <position position="208"/>
    </location>
</feature>
<feature type="sequence conflict" description="In Ref. 2; AAH07154/AAH25808." evidence="7" ref="2">
    <original>T</original>
    <variation>M</variation>
    <location>
        <position position="632"/>
    </location>
</feature>
<feature type="sequence conflict" description="In Ref. 1; BAE22543." evidence="7" ref="1">
    <original>I</original>
    <variation>M</variation>
    <location>
        <position position="759"/>
    </location>
</feature>
<feature type="sequence conflict" description="In Ref. 1; BAC34176." evidence="7" ref="1">
    <original>S</original>
    <variation>C</variation>
    <location>
        <position position="781"/>
    </location>
</feature>
<feature type="sequence conflict" description="In Ref. 2; AAH25808." evidence="7" ref="2">
    <original>I</original>
    <variation>M</variation>
    <location>
        <position position="785"/>
    </location>
</feature>
<keyword id="KW-0025">Alternative splicing</keyword>
<keyword id="KW-0967">Endosome</keyword>
<keyword id="KW-0472">Membrane</keyword>
<keyword id="KW-0597">Phosphoprotein</keyword>
<keyword id="KW-0653">Protein transport</keyword>
<keyword id="KW-1185">Reference proteome</keyword>
<keyword id="KW-0812">Transmembrane</keyword>
<keyword id="KW-1133">Transmembrane helix</keyword>
<keyword id="KW-0813">Transport</keyword>
<evidence type="ECO:0000250" key="1">
    <source>
        <dbReference type="UniProtKB" id="Q7Z3J2"/>
    </source>
</evidence>
<evidence type="ECO:0000255" key="2"/>
<evidence type="ECO:0000256" key="3">
    <source>
        <dbReference type="SAM" id="MobiDB-lite"/>
    </source>
</evidence>
<evidence type="ECO:0000269" key="4">
    <source>
    </source>
</evidence>
<evidence type="ECO:0000303" key="5">
    <source>
    </source>
</evidence>
<evidence type="ECO:0000303" key="6">
    <source>
    </source>
</evidence>
<evidence type="ECO:0000305" key="7"/>
<evidence type="ECO:0000312" key="8">
    <source>
        <dbReference type="MGI" id="MGI:1918767"/>
    </source>
</evidence>
<sequence length="963" mass="109077">MAVFPWHSRNRNYKAELASCRLETVPLECGDYHPLKPITVTESKTKKVSRKGSTSSTSSSSSSSVIDPLSSVLDGTDPLSMFAATSDPAATGTVTDSSRKKRDKDENSFVGPDFEPWANKRVEILARYTTTEKLSINLFMGSEKGRGGAAASAMSEKVRTRLEELDDFEEGSQKELLNLTQQDYVNRIEELNQSLKDAWASDQKVKALKIVIQCSKLLSDTSVIQFYPSKFVLITDILDTFGKLVYERISSMCVDSRSALPDHFSPENVNDTAKETCLNWFFKIASIRELIPRFYVEASILKCNKFLSKTGISECLPRLTCMIRGIGDPLVSVYARAYLCRVGIEVAPHLKESLNKNFFDFLLTFKQIHGDTVQNQLVAQGVELLSYLPLYSPAMGWIFQCVSYHAPEALLTEMMERCKKLGNNALLLNSVMSAFRAEFVATRSMDFIGMIKECDESGFPKHLLFRSLGLNLALADPPENDRLQILNEAWKVITKLKSPQDYINCAEVWVEYTCRHFTKREVNTVLADVIKHMTPDRAFEDSYPQLQSIIQKVIAHFHDFSVLFSVEKFLPFLDMFQKESVRVEVCKCIMEAFIKHQQEPTKDPVILNALLHICKTMHDSVNALTLEDEKRTLAHLINGFIKMVSFGRDFEQQLSFYVESRSMFCNLEPVLVQLIHSVNRLAMETRKVMKGNHSRKTAAFVRACVAYCFITIPSLVGIFTRLNLYLHSGQVALANQCLSQADAFFKAAIGLVPEVPKTISIDGKLRPSEPFLLEFLCNFFSTLLIVPDHPEHGVLFLVRELLNVIQDYTWEDSSDDKIRIYTSVLHLLSAMSQDTYLYHIDKVDSNDSLYGGDSKFLAENSKLCEAVMAQILEHLKTLAKDEALKRQSLLGLSFFNSILAHGDLRNNKLNQLSVNLWHLAQRHGCADTRTMVKTLDYIKKRSKQPDMNHLSELALRLPLQTRT</sequence>
<proteinExistence type="evidence at protein level"/>
<accession>Q8BWQ6</accession>
<accession>Q3UWS3</accession>
<accession>Q3UXM0</accession>
<accession>Q7TQF5</accession>
<accession>Q80XN3</accession>
<accession>Q8R3A8</accession>
<accession>Q91VY3</accession>
<accession>Q9D307</accession>